<comment type="function">
    <text evidence="1">Translation factor specific for subunit 6 of the mitochondrial ATPase. Required for assembly of the CF(0) component of the ATPase (By similarity).</text>
</comment>
<comment type="subcellular location">
    <subcellularLocation>
        <location evidence="1">Mitochondrion inner membrane</location>
        <topology evidence="1">Peripheral membrane protein</topology>
        <orientation evidence="1">Matrix side</orientation>
    </subcellularLocation>
</comment>
<comment type="similarity">
    <text evidence="3">Belongs to the ATP22 family.</text>
</comment>
<protein>
    <recommendedName>
        <fullName>Mitochondrial translation factor ATP22</fullName>
    </recommendedName>
</protein>
<keyword id="KW-0472">Membrane</keyword>
<keyword id="KW-0496">Mitochondrion</keyword>
<keyword id="KW-0999">Mitochondrion inner membrane</keyword>
<keyword id="KW-0809">Transit peptide</keyword>
<keyword id="KW-0810">Translation regulation</keyword>
<proteinExistence type="inferred from homology"/>
<name>ATP22_YEAS8</name>
<reference key="1">
    <citation type="journal article" date="2009" name="Proc. Natl. Acad. Sci. U.S.A.">
        <title>Eukaryote-to-eukaryote gene transfer events revealed by the genome sequence of the wine yeast Saccharomyces cerevisiae EC1118.</title>
        <authorList>
            <person name="Novo M."/>
            <person name="Bigey F."/>
            <person name="Beyne E."/>
            <person name="Galeote V."/>
            <person name="Gavory F."/>
            <person name="Mallet S."/>
            <person name="Cambon B."/>
            <person name="Legras J.-L."/>
            <person name="Wincker P."/>
            <person name="Casaregola S."/>
            <person name="Dequin S."/>
        </authorList>
    </citation>
    <scope>NUCLEOTIDE SEQUENCE [LARGE SCALE GENOMIC DNA]</scope>
    <source>
        <strain>Lalvin EC1118 / Prise de mousse</strain>
    </source>
</reference>
<feature type="transit peptide" description="Mitochondrion" evidence="2">
    <location>
        <begin position="1"/>
        <end position="56"/>
    </location>
</feature>
<feature type="chain" id="PRO_0000392081" description="Mitochondrial translation factor ATP22">
    <location>
        <begin position="57"/>
        <end position="684"/>
    </location>
</feature>
<gene>
    <name type="primary">ATP22</name>
    <name type="ORF">EC1118_1D0_6414g</name>
</gene>
<evidence type="ECO:0000250" key="1"/>
<evidence type="ECO:0000255" key="2"/>
<evidence type="ECO:0000305" key="3"/>
<dbReference type="EMBL" id="FN393063">
    <property type="protein sequence ID" value="CAY78850.1"/>
    <property type="molecule type" value="Genomic_DNA"/>
</dbReference>
<dbReference type="HOGENOM" id="CLU_024415_0_0_1"/>
<dbReference type="OrthoDB" id="35825at4893"/>
<dbReference type="Proteomes" id="UP000000286">
    <property type="component" value="Chromosome IV, Scaffold EC1118_1D0"/>
</dbReference>
<dbReference type="GO" id="GO:0005743">
    <property type="term" value="C:mitochondrial inner membrane"/>
    <property type="evidence" value="ECO:0007669"/>
    <property type="project" value="UniProtKB-SubCell"/>
</dbReference>
<dbReference type="GO" id="GO:0045182">
    <property type="term" value="F:translation regulator activity"/>
    <property type="evidence" value="ECO:0007669"/>
    <property type="project" value="InterPro"/>
</dbReference>
<dbReference type="InterPro" id="IPR017207">
    <property type="entry name" value="Atp22"/>
</dbReference>
<dbReference type="PIRSF" id="PIRSF037437">
    <property type="entry name" value="Atp22"/>
    <property type="match status" value="1"/>
</dbReference>
<organism>
    <name type="scientific">Saccharomyces cerevisiae (strain Lalvin EC1118 / Prise de mousse)</name>
    <name type="common">Baker's yeast</name>
    <dbReference type="NCBI Taxonomy" id="643680"/>
    <lineage>
        <taxon>Eukaryota</taxon>
        <taxon>Fungi</taxon>
        <taxon>Dikarya</taxon>
        <taxon>Ascomycota</taxon>
        <taxon>Saccharomycotina</taxon>
        <taxon>Saccharomycetes</taxon>
        <taxon>Saccharomycetales</taxon>
        <taxon>Saccharomycetaceae</taxon>
        <taxon>Saccharomyces</taxon>
    </lineage>
</organism>
<accession>C8Z5R1</accession>
<sequence length="684" mass="79756">MLKCICRVYSQPLAQMVTSPLFKHMGSAGTYTILPITNLRHLSTKNCPLKIKSNRSEPLQFGDFERQVPCSRKSGSSKNVQKRLYELRQLKTVLSETFGVTEYASFFESLRNALHINNCSENEKKKLLYDIILHQHELYPEVARKIGFYLPGEVHRWFWYHIPKSESFNHYLFLLKSDVLLFTSNYCTRFTNRLIKGTEMERQLATFQIFLHDETNIKFIMEKVLKLHTFDSLIALVNGLVKAKNFRFIKVFIQALLQKLEQHCYSGKDGAKQKNLRYVKFNNTLLYYLLKSGNVELFIKTFQEELKFIVSSGLLNHIDGNEHILNFPIHHYLNLLRISNRQEELFNVISCLQSSPLMKYKLFKEFLMGELIASFQAFRDPKLVCKYLLSSYSSKASANILNALGIWGWLYHSKSTTLTAPTLARELKNKNNILPNTMRIGSPVTVPILTELYRSLLSSSSVSLESGQFKNCLLDLYYKYKSFLSEEAHKYRYWRNDTGILNVFLNYIRFQAREPRLAYNVLLDFYSQPFAKKVVLTTTLCPFSIVAYKNHTLTQAELSELLQVMHKNGVPLTFKFCSAMVMHYVKMRDEKGARSWYNKILFGGFEIRHMALIQIIKDQGWPFPKNFDETLLTELVENNNIKEPTDSTLFTDEDMFEEDGKPRFNDDDVNKCTNIIRETLKSLN</sequence>